<dbReference type="EMBL" id="AE005674">
    <property type="protein sequence ID" value="AAN44516.2"/>
    <property type="molecule type" value="Genomic_DNA"/>
</dbReference>
<dbReference type="EMBL" id="AE014073">
    <property type="protein sequence ID" value="AAP18327.1"/>
    <property type="molecule type" value="Genomic_DNA"/>
</dbReference>
<dbReference type="SMR" id="P0A704"/>
<dbReference type="STRING" id="198214.SF3038"/>
<dbReference type="PaxDb" id="198214-SF3038"/>
<dbReference type="KEGG" id="sfl:SF3038"/>
<dbReference type="KEGG" id="sfx:S3239"/>
<dbReference type="PATRIC" id="fig|198214.7.peg.3612"/>
<dbReference type="HOGENOM" id="CLU_126929_0_0_6"/>
<dbReference type="Proteomes" id="UP000001006">
    <property type="component" value="Chromosome"/>
</dbReference>
<dbReference type="Proteomes" id="UP000002673">
    <property type="component" value="Chromosome"/>
</dbReference>
<dbReference type="GO" id="GO:0016151">
    <property type="term" value="F:nickel cation binding"/>
    <property type="evidence" value="ECO:0007669"/>
    <property type="project" value="UniProtKB-UniRule"/>
</dbReference>
<dbReference type="GO" id="GO:0008270">
    <property type="term" value="F:zinc ion binding"/>
    <property type="evidence" value="ECO:0007669"/>
    <property type="project" value="UniProtKB-UniRule"/>
</dbReference>
<dbReference type="GO" id="GO:0051604">
    <property type="term" value="P:protein maturation"/>
    <property type="evidence" value="ECO:0007669"/>
    <property type="project" value="InterPro"/>
</dbReference>
<dbReference type="GO" id="GO:0036211">
    <property type="term" value="P:protein modification process"/>
    <property type="evidence" value="ECO:0007669"/>
    <property type="project" value="UniProtKB-UniRule"/>
</dbReference>
<dbReference type="FunFam" id="3.30.2320.80:FF:000001">
    <property type="entry name" value="Hydrogenase maturation factor HypA"/>
    <property type="match status" value="1"/>
</dbReference>
<dbReference type="Gene3D" id="3.30.2320.80">
    <property type="match status" value="1"/>
</dbReference>
<dbReference type="HAMAP" id="MF_02099">
    <property type="entry name" value="HybF_subfam"/>
    <property type="match status" value="1"/>
</dbReference>
<dbReference type="HAMAP" id="MF_00213">
    <property type="entry name" value="HypA_HybF"/>
    <property type="match status" value="1"/>
</dbReference>
<dbReference type="InterPro" id="IPR039002">
    <property type="entry name" value="HybF"/>
</dbReference>
<dbReference type="InterPro" id="IPR020538">
    <property type="entry name" value="Hydgase_Ni_incorp_HypA/HybF_CS"/>
</dbReference>
<dbReference type="InterPro" id="IPR000688">
    <property type="entry name" value="HypA/HybF"/>
</dbReference>
<dbReference type="NCBIfam" id="TIGR00100">
    <property type="entry name" value="hypA"/>
    <property type="match status" value="1"/>
</dbReference>
<dbReference type="NCBIfam" id="NF002979">
    <property type="entry name" value="PRK03681.1"/>
    <property type="match status" value="1"/>
</dbReference>
<dbReference type="NCBIfam" id="NF009046">
    <property type="entry name" value="PRK12380.1"/>
    <property type="match status" value="1"/>
</dbReference>
<dbReference type="PANTHER" id="PTHR34535:SF4">
    <property type="entry name" value="HYDROGENASE MATURATION FACTOR HYBF"/>
    <property type="match status" value="1"/>
</dbReference>
<dbReference type="PANTHER" id="PTHR34535">
    <property type="entry name" value="HYDROGENASE MATURATION FACTOR HYPA"/>
    <property type="match status" value="1"/>
</dbReference>
<dbReference type="Pfam" id="PF01155">
    <property type="entry name" value="HypA"/>
    <property type="match status" value="1"/>
</dbReference>
<dbReference type="PIRSF" id="PIRSF004761">
    <property type="entry name" value="Hydrgn_mat_HypA"/>
    <property type="match status" value="1"/>
</dbReference>
<dbReference type="PROSITE" id="PS01249">
    <property type="entry name" value="HYPA"/>
    <property type="match status" value="1"/>
</dbReference>
<feature type="chain" id="PRO_0000129071" description="Hydrogenase maturation factor HybF">
    <location>
        <begin position="1"/>
        <end position="113"/>
    </location>
</feature>
<feature type="binding site" evidence="1">
    <location>
        <position position="2"/>
    </location>
    <ligand>
        <name>Ni(2+)</name>
        <dbReference type="ChEBI" id="CHEBI:49786"/>
    </ligand>
</feature>
<feature type="binding site" evidence="1">
    <location>
        <position position="3"/>
    </location>
    <ligand>
        <name>Ni(2+)</name>
        <dbReference type="ChEBI" id="CHEBI:49786"/>
    </ligand>
</feature>
<feature type="binding site" evidence="1">
    <location>
        <position position="73"/>
    </location>
    <ligand>
        <name>Zn(2+)</name>
        <dbReference type="ChEBI" id="CHEBI:29105"/>
    </ligand>
</feature>
<feature type="binding site" evidence="1">
    <location>
        <position position="76"/>
    </location>
    <ligand>
        <name>Zn(2+)</name>
        <dbReference type="ChEBI" id="CHEBI:29105"/>
    </ligand>
</feature>
<feature type="binding site" evidence="1">
    <location>
        <position position="89"/>
    </location>
    <ligand>
        <name>Zn(2+)</name>
        <dbReference type="ChEBI" id="CHEBI:29105"/>
    </ligand>
</feature>
<feature type="binding site" evidence="1">
    <location>
        <position position="92"/>
    </location>
    <ligand>
        <name>Zn(2+)</name>
        <dbReference type="ChEBI" id="CHEBI:29105"/>
    </ligand>
</feature>
<sequence>MHELSLCQSAVEIIQRQAEQHDVKRVTAVWLEIGALSCVEESAVRFSFEIVCHGTVAQGCDLHIVYKPAQAWCWDCSQVVEIHQHDAQCPLCHGERLRVDTGDSLIVKSIEVE</sequence>
<accession>P0A704</accession>
<accession>P37184</accession>
<accession>Q46846</accession>
<name>HYBF_SHIFL</name>
<gene>
    <name evidence="1" type="primary">hybF</name>
    <name type="ordered locus">SF3038</name>
    <name type="ordered locus">S3239</name>
</gene>
<organism>
    <name type="scientific">Shigella flexneri</name>
    <dbReference type="NCBI Taxonomy" id="623"/>
    <lineage>
        <taxon>Bacteria</taxon>
        <taxon>Pseudomonadati</taxon>
        <taxon>Pseudomonadota</taxon>
        <taxon>Gammaproteobacteria</taxon>
        <taxon>Enterobacterales</taxon>
        <taxon>Enterobacteriaceae</taxon>
        <taxon>Shigella</taxon>
    </lineage>
</organism>
<evidence type="ECO:0000255" key="1">
    <source>
        <dbReference type="HAMAP-Rule" id="MF_02099"/>
    </source>
</evidence>
<comment type="function">
    <text evidence="1">Involved in the maturation of [NiFe] hydrogenases. Required for nickel insertion into the metal center of the hydrogenase.</text>
</comment>
<comment type="similarity">
    <text evidence="1">Belongs to the HypA/HybF family. HybF subfamily.</text>
</comment>
<protein>
    <recommendedName>
        <fullName evidence="1">Hydrogenase maturation factor HybF</fullName>
    </recommendedName>
</protein>
<proteinExistence type="inferred from homology"/>
<keyword id="KW-0479">Metal-binding</keyword>
<keyword id="KW-0533">Nickel</keyword>
<keyword id="KW-1185">Reference proteome</keyword>
<keyword id="KW-0862">Zinc</keyword>
<reference key="1">
    <citation type="journal article" date="2002" name="Nucleic Acids Res.">
        <title>Genome sequence of Shigella flexneri 2a: insights into pathogenicity through comparison with genomes of Escherichia coli K12 and O157.</title>
        <authorList>
            <person name="Jin Q."/>
            <person name="Yuan Z."/>
            <person name="Xu J."/>
            <person name="Wang Y."/>
            <person name="Shen Y."/>
            <person name="Lu W."/>
            <person name="Wang J."/>
            <person name="Liu H."/>
            <person name="Yang J."/>
            <person name="Yang F."/>
            <person name="Zhang X."/>
            <person name="Zhang J."/>
            <person name="Yang G."/>
            <person name="Wu H."/>
            <person name="Qu D."/>
            <person name="Dong J."/>
            <person name="Sun L."/>
            <person name="Xue Y."/>
            <person name="Zhao A."/>
            <person name="Gao Y."/>
            <person name="Zhu J."/>
            <person name="Kan B."/>
            <person name="Ding K."/>
            <person name="Chen S."/>
            <person name="Cheng H."/>
            <person name="Yao Z."/>
            <person name="He B."/>
            <person name="Chen R."/>
            <person name="Ma D."/>
            <person name="Qiang B."/>
            <person name="Wen Y."/>
            <person name="Hou Y."/>
            <person name="Yu J."/>
        </authorList>
    </citation>
    <scope>NUCLEOTIDE SEQUENCE [LARGE SCALE GENOMIC DNA]</scope>
    <source>
        <strain>301 / Serotype 2a</strain>
    </source>
</reference>
<reference key="2">
    <citation type="journal article" date="2003" name="Infect. Immun.">
        <title>Complete genome sequence and comparative genomics of Shigella flexneri serotype 2a strain 2457T.</title>
        <authorList>
            <person name="Wei J."/>
            <person name="Goldberg M.B."/>
            <person name="Burland V."/>
            <person name="Venkatesan M.M."/>
            <person name="Deng W."/>
            <person name="Fournier G."/>
            <person name="Mayhew G.F."/>
            <person name="Plunkett G. III"/>
            <person name="Rose D.J."/>
            <person name="Darling A."/>
            <person name="Mau B."/>
            <person name="Perna N.T."/>
            <person name="Payne S.M."/>
            <person name="Runyen-Janecky L.J."/>
            <person name="Zhou S."/>
            <person name="Schwartz D.C."/>
            <person name="Blattner F.R."/>
        </authorList>
    </citation>
    <scope>NUCLEOTIDE SEQUENCE [LARGE SCALE GENOMIC DNA]</scope>
    <source>
        <strain>ATCC 700930 / 2457T / Serotype 2a</strain>
    </source>
</reference>